<keyword id="KW-0028">Amino-acid biosynthesis</keyword>
<keyword id="KW-0100">Branched-chain amino acid biosynthesis</keyword>
<keyword id="KW-0963">Cytoplasm</keyword>
<keyword id="KW-0432">Leucine biosynthesis</keyword>
<keyword id="KW-0460">Magnesium</keyword>
<keyword id="KW-0464">Manganese</keyword>
<keyword id="KW-0479">Metal-binding</keyword>
<keyword id="KW-0520">NAD</keyword>
<keyword id="KW-0560">Oxidoreductase</keyword>
<protein>
    <recommendedName>
        <fullName evidence="1">3-isopropylmalate dehydrogenase</fullName>
        <ecNumber evidence="1">1.1.1.85</ecNumber>
    </recommendedName>
    <alternativeName>
        <fullName evidence="1">3-IPM-DH</fullName>
    </alternativeName>
    <alternativeName>
        <fullName evidence="1">Beta-IPM dehydrogenase</fullName>
        <shortName evidence="1">IMDH</shortName>
    </alternativeName>
</protein>
<feature type="chain" id="PRO_0000083659" description="3-isopropylmalate dehydrogenase">
    <location>
        <begin position="1"/>
        <end position="363"/>
    </location>
</feature>
<feature type="binding site" evidence="1">
    <location>
        <begin position="77"/>
        <end position="90"/>
    </location>
    <ligand>
        <name>NAD(+)</name>
        <dbReference type="ChEBI" id="CHEBI:57540"/>
    </ligand>
</feature>
<feature type="binding site" evidence="1">
    <location>
        <position position="98"/>
    </location>
    <ligand>
        <name>substrate</name>
    </ligand>
</feature>
<feature type="binding site" evidence="1">
    <location>
        <position position="108"/>
    </location>
    <ligand>
        <name>substrate</name>
    </ligand>
</feature>
<feature type="binding site" evidence="1">
    <location>
        <position position="137"/>
    </location>
    <ligand>
        <name>substrate</name>
    </ligand>
</feature>
<feature type="binding site" evidence="1">
    <location>
        <position position="226"/>
    </location>
    <ligand>
        <name>Mg(2+)</name>
        <dbReference type="ChEBI" id="CHEBI:18420"/>
    </ligand>
</feature>
<feature type="binding site" evidence="1">
    <location>
        <position position="226"/>
    </location>
    <ligand>
        <name>substrate</name>
    </ligand>
</feature>
<feature type="binding site" evidence="1">
    <location>
        <position position="250"/>
    </location>
    <ligand>
        <name>Mg(2+)</name>
        <dbReference type="ChEBI" id="CHEBI:18420"/>
    </ligand>
</feature>
<feature type="binding site" evidence="1">
    <location>
        <position position="254"/>
    </location>
    <ligand>
        <name>Mg(2+)</name>
        <dbReference type="ChEBI" id="CHEBI:18420"/>
    </ligand>
</feature>
<feature type="binding site" evidence="1">
    <location>
        <begin position="284"/>
        <end position="296"/>
    </location>
    <ligand>
        <name>NAD(+)</name>
        <dbReference type="ChEBI" id="CHEBI:57540"/>
    </ligand>
</feature>
<feature type="site" description="Important for catalysis" evidence="1">
    <location>
        <position position="144"/>
    </location>
</feature>
<feature type="site" description="Important for catalysis" evidence="1">
    <location>
        <position position="194"/>
    </location>
</feature>
<sequence>MTKIYNLAILPGDGIGPELLQKDLNFKVLKEQYKLKINTTEYDIGGIAIDKYGKALPKETLDGCKESDSILFGSVGGPKWQHLPPDQQPERAALLPIRKYFNLFSNLRPAKLYSTLNHLSPLRRDISEKGFDILCVRELTGGIYFGKPKGYIKNIIDKKAFDTEIYYASEIKRIAHIGFKLAQNRKYKITSVDKANVLESSVLWRETVNTISKEYPDVKLSHLYIDHAAMQIIKNPDKFDVILTSNLFGDILSDECAMITGSIGMLPSASLNDSNFGLYEPAGGSAPDIAGKNIANPIAQILSIAMLVRYTMKLPMISDHIESAVIDTLKKGYRTLDIANDKEKYVSTNDIGDIISDILKKRI</sequence>
<gene>
    <name evidence="1" type="primary">leuB</name>
</gene>
<evidence type="ECO:0000255" key="1">
    <source>
        <dbReference type="HAMAP-Rule" id="MF_01033"/>
    </source>
</evidence>
<name>LEU3_BUCPS</name>
<reference key="1">
    <citation type="journal article" date="2002" name="Appl. Environ. Microbiol.">
        <title>Molecular characterization of the leucine cluster in Buchnera sp. strain PSY, a primary endosymbiont of the aphid Pemphigus spyrothecae.</title>
        <authorList>
            <person name="Sabater-Munoz B."/>
            <person name="Gomez-Valero L."/>
            <person name="van Ham R.C.H.J."/>
            <person name="Silva F.J."/>
            <person name="Latorre A."/>
        </authorList>
    </citation>
    <scope>NUCLEOTIDE SEQUENCE [GENOMIC DNA]</scope>
</reference>
<accession>P59027</accession>
<dbReference type="EC" id="1.1.1.85" evidence="1"/>
<dbReference type="EMBL" id="AJ426489">
    <property type="protein sequence ID" value="CAD20138.1"/>
    <property type="molecule type" value="Genomic_DNA"/>
</dbReference>
<dbReference type="SMR" id="P59027"/>
<dbReference type="UniPathway" id="UPA00048">
    <property type="reaction ID" value="UER00072"/>
</dbReference>
<dbReference type="GO" id="GO:0005829">
    <property type="term" value="C:cytosol"/>
    <property type="evidence" value="ECO:0007669"/>
    <property type="project" value="TreeGrafter"/>
</dbReference>
<dbReference type="GO" id="GO:0003862">
    <property type="term" value="F:3-isopropylmalate dehydrogenase activity"/>
    <property type="evidence" value="ECO:0007669"/>
    <property type="project" value="UniProtKB-UniRule"/>
</dbReference>
<dbReference type="GO" id="GO:0000287">
    <property type="term" value="F:magnesium ion binding"/>
    <property type="evidence" value="ECO:0007669"/>
    <property type="project" value="InterPro"/>
</dbReference>
<dbReference type="GO" id="GO:0051287">
    <property type="term" value="F:NAD binding"/>
    <property type="evidence" value="ECO:0007669"/>
    <property type="project" value="InterPro"/>
</dbReference>
<dbReference type="GO" id="GO:0009098">
    <property type="term" value="P:L-leucine biosynthetic process"/>
    <property type="evidence" value="ECO:0007669"/>
    <property type="project" value="UniProtKB-UniRule"/>
</dbReference>
<dbReference type="FunFam" id="3.40.718.10:FF:000006">
    <property type="entry name" value="3-isopropylmalate dehydrogenase"/>
    <property type="match status" value="1"/>
</dbReference>
<dbReference type="Gene3D" id="3.40.718.10">
    <property type="entry name" value="Isopropylmalate Dehydrogenase"/>
    <property type="match status" value="1"/>
</dbReference>
<dbReference type="HAMAP" id="MF_01033">
    <property type="entry name" value="LeuB_type1"/>
    <property type="match status" value="1"/>
</dbReference>
<dbReference type="InterPro" id="IPR019818">
    <property type="entry name" value="IsoCit/isopropylmalate_DH_CS"/>
</dbReference>
<dbReference type="InterPro" id="IPR024084">
    <property type="entry name" value="IsoPropMal-DH-like_dom"/>
</dbReference>
<dbReference type="InterPro" id="IPR004429">
    <property type="entry name" value="Isopropylmalate_DH"/>
</dbReference>
<dbReference type="NCBIfam" id="TIGR00169">
    <property type="entry name" value="leuB"/>
    <property type="match status" value="1"/>
</dbReference>
<dbReference type="PANTHER" id="PTHR42979">
    <property type="entry name" value="3-ISOPROPYLMALATE DEHYDROGENASE"/>
    <property type="match status" value="1"/>
</dbReference>
<dbReference type="PANTHER" id="PTHR42979:SF1">
    <property type="entry name" value="3-ISOPROPYLMALATE DEHYDROGENASE"/>
    <property type="match status" value="1"/>
</dbReference>
<dbReference type="Pfam" id="PF00180">
    <property type="entry name" value="Iso_dh"/>
    <property type="match status" value="1"/>
</dbReference>
<dbReference type="SMART" id="SM01329">
    <property type="entry name" value="Iso_dh"/>
    <property type="match status" value="1"/>
</dbReference>
<dbReference type="SUPFAM" id="SSF53659">
    <property type="entry name" value="Isocitrate/Isopropylmalate dehydrogenase-like"/>
    <property type="match status" value="1"/>
</dbReference>
<dbReference type="PROSITE" id="PS00470">
    <property type="entry name" value="IDH_IMDH"/>
    <property type="match status" value="1"/>
</dbReference>
<proteinExistence type="inferred from homology"/>
<organism>
    <name type="scientific">Buchnera aphidicola subsp. Pemphigus spyrothecae</name>
    <dbReference type="NCBI Taxonomy" id="98799"/>
    <lineage>
        <taxon>Bacteria</taxon>
        <taxon>Pseudomonadati</taxon>
        <taxon>Pseudomonadota</taxon>
        <taxon>Gammaproteobacteria</taxon>
        <taxon>Enterobacterales</taxon>
        <taxon>Erwiniaceae</taxon>
        <taxon>Buchnera</taxon>
    </lineage>
</organism>
<comment type="function">
    <text evidence="1">Catalyzes the oxidation of 3-carboxy-2-hydroxy-4-methylpentanoate (3-isopropylmalate) to 3-carboxy-4-methyl-2-oxopentanoate. The product decarboxylates to 4-methyl-2 oxopentanoate.</text>
</comment>
<comment type="catalytic activity">
    <reaction evidence="1">
        <text>(2R,3S)-3-isopropylmalate + NAD(+) = 4-methyl-2-oxopentanoate + CO2 + NADH</text>
        <dbReference type="Rhea" id="RHEA:32271"/>
        <dbReference type="ChEBI" id="CHEBI:16526"/>
        <dbReference type="ChEBI" id="CHEBI:17865"/>
        <dbReference type="ChEBI" id="CHEBI:35121"/>
        <dbReference type="ChEBI" id="CHEBI:57540"/>
        <dbReference type="ChEBI" id="CHEBI:57945"/>
        <dbReference type="EC" id="1.1.1.85"/>
    </reaction>
</comment>
<comment type="cofactor">
    <cofactor evidence="1">
        <name>Mg(2+)</name>
        <dbReference type="ChEBI" id="CHEBI:18420"/>
    </cofactor>
    <cofactor evidence="1">
        <name>Mn(2+)</name>
        <dbReference type="ChEBI" id="CHEBI:29035"/>
    </cofactor>
    <text evidence="1">Binds 1 Mg(2+) or Mn(2+) ion per subunit.</text>
</comment>
<comment type="pathway">
    <text evidence="1">Amino-acid biosynthesis; L-leucine biosynthesis; L-leucine from 3-methyl-2-oxobutanoate: step 3/4.</text>
</comment>
<comment type="subunit">
    <text evidence="1">Homodimer.</text>
</comment>
<comment type="subcellular location">
    <subcellularLocation>
        <location evidence="1">Cytoplasm</location>
    </subcellularLocation>
</comment>
<comment type="similarity">
    <text evidence="1">Belongs to the isocitrate and isopropylmalate dehydrogenases family. LeuB type 1 subfamily.</text>
</comment>